<gene>
    <name type="primary">BHLH25</name>
    <name type="synonym">EN29</name>
    <name type="ordered locus">At4g37850</name>
    <name type="ORF">T28I19.130</name>
</gene>
<protein>
    <recommendedName>
        <fullName>Transcription factor bHLH25</fullName>
    </recommendedName>
    <alternativeName>
        <fullName>Basic helix-loop-helix protein 25</fullName>
        <shortName>AtbHLH25</shortName>
        <shortName>bHLH 25</shortName>
    </alternativeName>
    <alternativeName>
        <fullName>Transcription factor EN 29</fullName>
    </alternativeName>
    <alternativeName>
        <fullName>bHLH transcription factor bHLH025</fullName>
    </alternativeName>
</protein>
<feature type="chain" id="PRO_0000358736" description="Transcription factor bHLH25">
    <location>
        <begin position="1"/>
        <end position="328"/>
    </location>
</feature>
<feature type="domain" description="bHLH" evidence="1">
    <location>
        <begin position="148"/>
        <end position="197"/>
    </location>
</feature>
<feature type="region of interest" description="Disordered" evidence="2">
    <location>
        <begin position="125"/>
        <end position="152"/>
    </location>
</feature>
<organism>
    <name type="scientific">Arabidopsis thaliana</name>
    <name type="common">Mouse-ear cress</name>
    <dbReference type="NCBI Taxonomy" id="3702"/>
    <lineage>
        <taxon>Eukaryota</taxon>
        <taxon>Viridiplantae</taxon>
        <taxon>Streptophyta</taxon>
        <taxon>Embryophyta</taxon>
        <taxon>Tracheophyta</taxon>
        <taxon>Spermatophyta</taxon>
        <taxon>Magnoliopsida</taxon>
        <taxon>eudicotyledons</taxon>
        <taxon>Gunneridae</taxon>
        <taxon>Pentapetalae</taxon>
        <taxon>rosids</taxon>
        <taxon>malvids</taxon>
        <taxon>Brassicales</taxon>
        <taxon>Brassicaceae</taxon>
        <taxon>Camelineae</taxon>
        <taxon>Arabidopsis</taxon>
    </lineage>
</organism>
<accession>Q9T072</accession>
<accession>Q8S3F0</accession>
<comment type="subunit">
    <text evidence="4">Homodimer.</text>
</comment>
<comment type="subcellular location">
    <subcellularLocation>
        <location evidence="1">Nucleus</location>
    </subcellularLocation>
</comment>
<comment type="tissue specificity">
    <text evidence="3">Expressed in flowers.</text>
</comment>
<comment type="induction">
    <text evidence="3">By ethylene (ACC) and jasmonic acid (JA) treatments.</text>
</comment>
<comment type="sequence caution" evidence="4">
    <conflict type="erroneous gene model prediction">
        <sequence resource="EMBL-CDS" id="CAB38933"/>
    </conflict>
</comment>
<comment type="sequence caution" evidence="4">
    <conflict type="erroneous gene model prediction">
        <sequence resource="EMBL-CDS" id="CAB80450"/>
    </conflict>
</comment>
<proteinExistence type="evidence at transcript level"/>
<sequence length="328" mass="37703">MSILSTRWFSEQEIEENSIIQQFHMNSIVGEVQEAQYIFPHSFTTNNDPSYDDLIEMKPPKILETTYISPSSHLPPNSKPHHIHRHSSSRILSFEDYGSNDMEHEYSPTYLNSIFSPKLEAQVQPHQKSDEFNRKGTKRAQPFSRNQSNAQDHIIAERKRREKLTQRFVALSALVPGLKKMDKASVLGDALKHIKYLQERVGELEEQKKERRLESMVLVKKSKLILDDNNQSFSSSCEDGFSDLDLPEIEVRFSDEDVLIKILCEKQKGHLAKIMAEIEKLHILITNSSVLNFGPTLDITIIAKKESDFDMTLMDVVKSLRSALSNFI</sequence>
<keyword id="KW-0238">DNA-binding</keyword>
<keyword id="KW-0539">Nucleus</keyword>
<keyword id="KW-1185">Reference proteome</keyword>
<keyword id="KW-0804">Transcription</keyword>
<keyword id="KW-0805">Transcription regulation</keyword>
<dbReference type="EMBL" id="AL035709">
    <property type="protein sequence ID" value="CAB38933.1"/>
    <property type="status" value="ALT_SEQ"/>
    <property type="molecule type" value="Genomic_DNA"/>
</dbReference>
<dbReference type="EMBL" id="AL161592">
    <property type="protein sequence ID" value="CAB80450.1"/>
    <property type="status" value="ALT_SEQ"/>
    <property type="molecule type" value="Genomic_DNA"/>
</dbReference>
<dbReference type="EMBL" id="CP002687">
    <property type="protein sequence ID" value="AEE86845.1"/>
    <property type="molecule type" value="Genomic_DNA"/>
</dbReference>
<dbReference type="EMBL" id="CP002687">
    <property type="protein sequence ID" value="ANM67978.1"/>
    <property type="molecule type" value="Genomic_DNA"/>
</dbReference>
<dbReference type="EMBL" id="AF488567">
    <property type="protein sequence ID" value="AAM10937.1"/>
    <property type="molecule type" value="mRNA"/>
</dbReference>
<dbReference type="PIR" id="T06032">
    <property type="entry name" value="T06032"/>
</dbReference>
<dbReference type="RefSeq" id="NP_001329767.1">
    <property type="nucleotide sequence ID" value="NM_001342458.1"/>
</dbReference>
<dbReference type="RefSeq" id="NP_195498.3">
    <property type="nucleotide sequence ID" value="NM_119946.4"/>
</dbReference>
<dbReference type="SMR" id="Q9T072"/>
<dbReference type="BioGRID" id="15222">
    <property type="interactions" value="7"/>
</dbReference>
<dbReference type="FunCoup" id="Q9T072">
    <property type="interactions" value="114"/>
</dbReference>
<dbReference type="IntAct" id="Q9T072">
    <property type="interactions" value="6"/>
</dbReference>
<dbReference type="STRING" id="3702.Q9T072"/>
<dbReference type="PaxDb" id="3702-AT4G37850.1"/>
<dbReference type="ProteomicsDB" id="240431"/>
<dbReference type="EnsemblPlants" id="AT4G37850.1">
    <property type="protein sequence ID" value="AT4G37850.1"/>
    <property type="gene ID" value="AT4G37850"/>
</dbReference>
<dbReference type="EnsemblPlants" id="AT4G37850.2">
    <property type="protein sequence ID" value="AT4G37850.2"/>
    <property type="gene ID" value="AT4G37850"/>
</dbReference>
<dbReference type="GeneID" id="829941"/>
<dbReference type="Gramene" id="AT4G37850.1">
    <property type="protein sequence ID" value="AT4G37850.1"/>
    <property type="gene ID" value="AT4G37850"/>
</dbReference>
<dbReference type="Gramene" id="AT4G37850.2">
    <property type="protein sequence ID" value="AT4G37850.2"/>
    <property type="gene ID" value="AT4G37850"/>
</dbReference>
<dbReference type="KEGG" id="ath:AT4G37850"/>
<dbReference type="Araport" id="AT4G37850"/>
<dbReference type="TAIR" id="AT4G37850"/>
<dbReference type="eggNOG" id="ENOG502QWBY">
    <property type="taxonomic scope" value="Eukaryota"/>
</dbReference>
<dbReference type="HOGENOM" id="CLU_046481_0_1_1"/>
<dbReference type="InParanoid" id="Q9T072"/>
<dbReference type="OMA" id="NDMEHEY"/>
<dbReference type="PhylomeDB" id="Q9T072"/>
<dbReference type="PRO" id="PR:Q9T072"/>
<dbReference type="Proteomes" id="UP000006548">
    <property type="component" value="Chromosome 4"/>
</dbReference>
<dbReference type="ExpressionAtlas" id="Q9T072">
    <property type="expression patterns" value="baseline and differential"/>
</dbReference>
<dbReference type="GO" id="GO:0005634">
    <property type="term" value="C:nucleus"/>
    <property type="evidence" value="ECO:0007669"/>
    <property type="project" value="UniProtKB-SubCell"/>
</dbReference>
<dbReference type="GO" id="GO:0003700">
    <property type="term" value="F:DNA-binding transcription factor activity"/>
    <property type="evidence" value="ECO:0000250"/>
    <property type="project" value="TAIR"/>
</dbReference>
<dbReference type="GO" id="GO:0046983">
    <property type="term" value="F:protein dimerization activity"/>
    <property type="evidence" value="ECO:0007669"/>
    <property type="project" value="InterPro"/>
</dbReference>
<dbReference type="GO" id="GO:0000976">
    <property type="term" value="F:transcription cis-regulatory region binding"/>
    <property type="evidence" value="ECO:0000353"/>
    <property type="project" value="TAIR"/>
</dbReference>
<dbReference type="GO" id="GO:0006355">
    <property type="term" value="P:regulation of DNA-templated transcription"/>
    <property type="evidence" value="ECO:0000304"/>
    <property type="project" value="TAIR"/>
</dbReference>
<dbReference type="CDD" id="cd11452">
    <property type="entry name" value="bHLH_AtNAI1_like"/>
    <property type="match status" value="1"/>
</dbReference>
<dbReference type="FunFam" id="4.10.280.10:FF:000095">
    <property type="entry name" value="Basic helix-loop-helix family protein"/>
    <property type="match status" value="1"/>
</dbReference>
<dbReference type="Gene3D" id="4.10.280.10">
    <property type="entry name" value="Helix-loop-helix DNA-binding domain"/>
    <property type="match status" value="1"/>
</dbReference>
<dbReference type="InterPro" id="IPR011598">
    <property type="entry name" value="bHLH_dom"/>
</dbReference>
<dbReference type="InterPro" id="IPR052610">
    <property type="entry name" value="bHLH_transcription_regulator"/>
</dbReference>
<dbReference type="InterPro" id="IPR036638">
    <property type="entry name" value="HLH_DNA-bd_sf"/>
</dbReference>
<dbReference type="PANTHER" id="PTHR45959">
    <property type="entry name" value="BHLH TRANSCRIPTION FACTOR"/>
    <property type="match status" value="1"/>
</dbReference>
<dbReference type="PANTHER" id="PTHR45959:SF73">
    <property type="entry name" value="TRANSCRIPTION FACTOR BHLH25"/>
    <property type="match status" value="1"/>
</dbReference>
<dbReference type="Pfam" id="PF00010">
    <property type="entry name" value="HLH"/>
    <property type="match status" value="1"/>
</dbReference>
<dbReference type="SMART" id="SM00353">
    <property type="entry name" value="HLH"/>
    <property type="match status" value="1"/>
</dbReference>
<dbReference type="SUPFAM" id="SSF47459">
    <property type="entry name" value="HLH, helix-loop-helix DNA-binding domain"/>
    <property type="match status" value="1"/>
</dbReference>
<dbReference type="PROSITE" id="PS50888">
    <property type="entry name" value="BHLH"/>
    <property type="match status" value="1"/>
</dbReference>
<reference key="1">
    <citation type="journal article" date="1999" name="Nature">
        <title>Sequence and analysis of chromosome 4 of the plant Arabidopsis thaliana.</title>
        <authorList>
            <person name="Mayer K.F.X."/>
            <person name="Schueller C."/>
            <person name="Wambutt R."/>
            <person name="Murphy G."/>
            <person name="Volckaert G."/>
            <person name="Pohl T."/>
            <person name="Duesterhoeft A."/>
            <person name="Stiekema W."/>
            <person name="Entian K.-D."/>
            <person name="Terryn N."/>
            <person name="Harris B."/>
            <person name="Ansorge W."/>
            <person name="Brandt P."/>
            <person name="Grivell L.A."/>
            <person name="Rieger M."/>
            <person name="Weichselgartner M."/>
            <person name="de Simone V."/>
            <person name="Obermaier B."/>
            <person name="Mache R."/>
            <person name="Mueller M."/>
            <person name="Kreis M."/>
            <person name="Delseny M."/>
            <person name="Puigdomenech P."/>
            <person name="Watson M."/>
            <person name="Schmidtheini T."/>
            <person name="Reichert B."/>
            <person name="Portetelle D."/>
            <person name="Perez-Alonso M."/>
            <person name="Boutry M."/>
            <person name="Bancroft I."/>
            <person name="Vos P."/>
            <person name="Hoheisel J."/>
            <person name="Zimmermann W."/>
            <person name="Wedler H."/>
            <person name="Ridley P."/>
            <person name="Langham S.-A."/>
            <person name="McCullagh B."/>
            <person name="Bilham L."/>
            <person name="Robben J."/>
            <person name="van der Schueren J."/>
            <person name="Grymonprez B."/>
            <person name="Chuang Y.-J."/>
            <person name="Vandenbussche F."/>
            <person name="Braeken M."/>
            <person name="Weltjens I."/>
            <person name="Voet M."/>
            <person name="Bastiaens I."/>
            <person name="Aert R."/>
            <person name="Defoor E."/>
            <person name="Weitzenegger T."/>
            <person name="Bothe G."/>
            <person name="Ramsperger U."/>
            <person name="Hilbert H."/>
            <person name="Braun M."/>
            <person name="Holzer E."/>
            <person name="Brandt A."/>
            <person name="Peters S."/>
            <person name="van Staveren M."/>
            <person name="Dirkse W."/>
            <person name="Mooijman P."/>
            <person name="Klein Lankhorst R."/>
            <person name="Rose M."/>
            <person name="Hauf J."/>
            <person name="Koetter P."/>
            <person name="Berneiser S."/>
            <person name="Hempel S."/>
            <person name="Feldpausch M."/>
            <person name="Lamberth S."/>
            <person name="Van den Daele H."/>
            <person name="De Keyser A."/>
            <person name="Buysshaert C."/>
            <person name="Gielen J."/>
            <person name="Villarroel R."/>
            <person name="De Clercq R."/>
            <person name="van Montagu M."/>
            <person name="Rogers J."/>
            <person name="Cronin A."/>
            <person name="Quail M.A."/>
            <person name="Bray-Allen S."/>
            <person name="Clark L."/>
            <person name="Doggett J."/>
            <person name="Hall S."/>
            <person name="Kay M."/>
            <person name="Lennard N."/>
            <person name="McLay K."/>
            <person name="Mayes R."/>
            <person name="Pettett A."/>
            <person name="Rajandream M.A."/>
            <person name="Lyne M."/>
            <person name="Benes V."/>
            <person name="Rechmann S."/>
            <person name="Borkova D."/>
            <person name="Bloecker H."/>
            <person name="Scharfe M."/>
            <person name="Grimm M."/>
            <person name="Loehnert T.-H."/>
            <person name="Dose S."/>
            <person name="de Haan M."/>
            <person name="Maarse A.C."/>
            <person name="Schaefer M."/>
            <person name="Mueller-Auer S."/>
            <person name="Gabel C."/>
            <person name="Fuchs M."/>
            <person name="Fartmann B."/>
            <person name="Granderath K."/>
            <person name="Dauner D."/>
            <person name="Herzl A."/>
            <person name="Neumann S."/>
            <person name="Argiriou A."/>
            <person name="Vitale D."/>
            <person name="Liguori R."/>
            <person name="Piravandi E."/>
            <person name="Massenet O."/>
            <person name="Quigley F."/>
            <person name="Clabauld G."/>
            <person name="Muendlein A."/>
            <person name="Felber R."/>
            <person name="Schnabl S."/>
            <person name="Hiller R."/>
            <person name="Schmidt W."/>
            <person name="Lecharny A."/>
            <person name="Aubourg S."/>
            <person name="Chefdor F."/>
            <person name="Cooke R."/>
            <person name="Berger C."/>
            <person name="Monfort A."/>
            <person name="Casacuberta E."/>
            <person name="Gibbons T."/>
            <person name="Weber N."/>
            <person name="Vandenbol M."/>
            <person name="Bargues M."/>
            <person name="Terol J."/>
            <person name="Torres A."/>
            <person name="Perez-Perez A."/>
            <person name="Purnelle B."/>
            <person name="Bent E."/>
            <person name="Johnson S."/>
            <person name="Tacon D."/>
            <person name="Jesse T."/>
            <person name="Heijnen L."/>
            <person name="Schwarz S."/>
            <person name="Scholler P."/>
            <person name="Heber S."/>
            <person name="Francs P."/>
            <person name="Bielke C."/>
            <person name="Frishman D."/>
            <person name="Haase D."/>
            <person name="Lemcke K."/>
            <person name="Mewes H.-W."/>
            <person name="Stocker S."/>
            <person name="Zaccaria P."/>
            <person name="Bevan M."/>
            <person name="Wilson R.K."/>
            <person name="de la Bastide M."/>
            <person name="Habermann K."/>
            <person name="Parnell L."/>
            <person name="Dedhia N."/>
            <person name="Gnoj L."/>
            <person name="Schutz K."/>
            <person name="Huang E."/>
            <person name="Spiegel L."/>
            <person name="Sekhon M."/>
            <person name="Murray J."/>
            <person name="Sheet P."/>
            <person name="Cordes M."/>
            <person name="Abu-Threideh J."/>
            <person name="Stoneking T."/>
            <person name="Kalicki J."/>
            <person name="Graves T."/>
            <person name="Harmon G."/>
            <person name="Edwards J."/>
            <person name="Latreille P."/>
            <person name="Courtney L."/>
            <person name="Cloud J."/>
            <person name="Abbott A."/>
            <person name="Scott K."/>
            <person name="Johnson D."/>
            <person name="Minx P."/>
            <person name="Bentley D."/>
            <person name="Fulton B."/>
            <person name="Miller N."/>
            <person name="Greco T."/>
            <person name="Kemp K."/>
            <person name="Kramer J."/>
            <person name="Fulton L."/>
            <person name="Mardis E."/>
            <person name="Dante M."/>
            <person name="Pepin K."/>
            <person name="Hillier L.W."/>
            <person name="Nelson J."/>
            <person name="Spieth J."/>
            <person name="Ryan E."/>
            <person name="Andrews S."/>
            <person name="Geisel C."/>
            <person name="Layman D."/>
            <person name="Du H."/>
            <person name="Ali J."/>
            <person name="Berghoff A."/>
            <person name="Jones K."/>
            <person name="Drone K."/>
            <person name="Cotton M."/>
            <person name="Joshu C."/>
            <person name="Antonoiu B."/>
            <person name="Zidanic M."/>
            <person name="Strong C."/>
            <person name="Sun H."/>
            <person name="Lamar B."/>
            <person name="Yordan C."/>
            <person name="Ma P."/>
            <person name="Zhong J."/>
            <person name="Preston R."/>
            <person name="Vil D."/>
            <person name="Shekher M."/>
            <person name="Matero A."/>
            <person name="Shah R."/>
            <person name="Swaby I.K."/>
            <person name="O'Shaughnessy A."/>
            <person name="Rodriguez M."/>
            <person name="Hoffman J."/>
            <person name="Till S."/>
            <person name="Granat S."/>
            <person name="Shohdy N."/>
            <person name="Hasegawa A."/>
            <person name="Hameed A."/>
            <person name="Lodhi M."/>
            <person name="Johnson A."/>
            <person name="Chen E."/>
            <person name="Marra M.A."/>
            <person name="Martienssen R."/>
            <person name="McCombie W.R."/>
        </authorList>
    </citation>
    <scope>NUCLEOTIDE SEQUENCE [LARGE SCALE GENOMIC DNA]</scope>
    <source>
        <strain>cv. Columbia</strain>
    </source>
</reference>
<reference key="2">
    <citation type="journal article" date="2017" name="Plant J.">
        <title>Araport11: a complete reannotation of the Arabidopsis thaliana reference genome.</title>
        <authorList>
            <person name="Cheng C.Y."/>
            <person name="Krishnakumar V."/>
            <person name="Chan A.P."/>
            <person name="Thibaud-Nissen F."/>
            <person name="Schobel S."/>
            <person name="Town C.D."/>
        </authorList>
    </citation>
    <scope>GENOME REANNOTATION</scope>
    <source>
        <strain>cv. Columbia</strain>
    </source>
</reference>
<reference key="3">
    <citation type="journal article" date="2003" name="Mol. Biol. Evol.">
        <title>The basic helix-loop-helix transcription factor family in plants: a genome-wide study of protein structure and functional diversity.</title>
        <authorList>
            <person name="Heim M.A."/>
            <person name="Jakoby M."/>
            <person name="Werber M."/>
            <person name="Martin C."/>
            <person name="Weisshaar B."/>
            <person name="Bailey P.C."/>
        </authorList>
    </citation>
    <scope>NUCLEOTIDE SEQUENCE [MRNA] OF 25-328</scope>
    <scope>TISSUE SPECIFICITY</scope>
    <scope>INDUCTION</scope>
    <scope>GENE FAMILY</scope>
    <scope>NOMENCLATURE</scope>
    <source>
        <strain>cv. Columbia</strain>
    </source>
</reference>
<reference key="4">
    <citation type="journal article" date="2003" name="Plant Cell">
        <title>The Arabidopsis basic/helix-loop-helix transcription factor family.</title>
        <authorList>
            <person name="Toledo-Ortiz G."/>
            <person name="Huq E."/>
            <person name="Quail P.H."/>
        </authorList>
    </citation>
    <scope>GENE FAMILY</scope>
</reference>
<reference key="5">
    <citation type="journal article" date="2003" name="Plant Cell">
        <title>Update on the basic helix-loop-helix transcription factor gene family in Arabidopsis thaliana.</title>
        <authorList>
            <person name="Bailey P.C."/>
            <person name="Martin C."/>
            <person name="Toledo-Ortiz G."/>
            <person name="Quail P.H."/>
            <person name="Huq E."/>
            <person name="Heim M.A."/>
            <person name="Jakoby M."/>
            <person name="Werber M."/>
            <person name="Weisshaar B."/>
        </authorList>
    </citation>
    <scope>GENE FAMILY</scope>
    <scope>NOMENCLATURE</scope>
</reference>
<name>BH025_ARATH</name>
<evidence type="ECO:0000255" key="1">
    <source>
        <dbReference type="PROSITE-ProRule" id="PRU00981"/>
    </source>
</evidence>
<evidence type="ECO:0000256" key="2">
    <source>
        <dbReference type="SAM" id="MobiDB-lite"/>
    </source>
</evidence>
<evidence type="ECO:0000269" key="3">
    <source>
    </source>
</evidence>
<evidence type="ECO:0000305" key="4"/>